<comment type="function">
    <text evidence="1">The RuvA-RuvB-RuvC complex processes Holliday junction (HJ) DNA during genetic recombination and DNA repair, while the RuvA-RuvB complex plays an important role in the rescue of blocked DNA replication forks via replication fork reversal (RFR). RuvA specifically binds to HJ cruciform DNA, conferring on it an open structure. The RuvB hexamer acts as an ATP-dependent pump, pulling dsDNA into and through the RuvAB complex. HJ branch migration allows RuvC to scan DNA until it finds its consensus sequence, where it cleaves and resolves the cruciform DNA.</text>
</comment>
<comment type="subunit">
    <text evidence="1">Homotetramer. Forms an RuvA(8)-RuvB(12)-Holliday junction (HJ) complex. HJ DNA is sandwiched between 2 RuvA tetramers; dsDNA enters through RuvA and exits via RuvB. An RuvB hexamer assembles on each DNA strand where it exits the tetramer. Each RuvB hexamer is contacted by two RuvA subunits (via domain III) on 2 adjacent RuvB subunits; this complex drives branch migration. In the full resolvosome a probable DNA-RuvA(4)-RuvB(12)-RuvC(2) complex forms which resolves the HJ.</text>
</comment>
<comment type="subcellular location">
    <subcellularLocation>
        <location evidence="1">Cytoplasm</location>
    </subcellularLocation>
</comment>
<comment type="domain">
    <text evidence="1">Has three domains with a flexible linker between the domains II and III and assumes an 'L' shape. Domain III is highly mobile and contacts RuvB.</text>
</comment>
<comment type="similarity">
    <text evidence="1">Belongs to the RuvA family.</text>
</comment>
<protein>
    <recommendedName>
        <fullName evidence="1">Holliday junction branch migration complex subunit RuvA</fullName>
    </recommendedName>
</protein>
<name>RUVA_DICNV</name>
<evidence type="ECO:0000255" key="1">
    <source>
        <dbReference type="HAMAP-Rule" id="MF_00031"/>
    </source>
</evidence>
<proteinExistence type="inferred from homology"/>
<feature type="chain" id="PRO_1000002441" description="Holliday junction branch migration complex subunit RuvA">
    <location>
        <begin position="1"/>
        <end position="204"/>
    </location>
</feature>
<feature type="region of interest" description="Domain I" evidence="1">
    <location>
        <begin position="1"/>
        <end position="63"/>
    </location>
</feature>
<feature type="region of interest" description="Domain II" evidence="1">
    <location>
        <begin position="64"/>
        <end position="142"/>
    </location>
</feature>
<feature type="region of interest" description="Flexible linker" evidence="1">
    <location>
        <begin position="143"/>
        <end position="152"/>
    </location>
</feature>
<feature type="region of interest" description="Domain III" evidence="1">
    <location>
        <begin position="152"/>
        <end position="204"/>
    </location>
</feature>
<keyword id="KW-0963">Cytoplasm</keyword>
<keyword id="KW-0227">DNA damage</keyword>
<keyword id="KW-0233">DNA recombination</keyword>
<keyword id="KW-0234">DNA repair</keyword>
<keyword id="KW-0238">DNA-binding</keyword>
<keyword id="KW-1185">Reference proteome</keyword>
<gene>
    <name evidence="1" type="primary">ruvA</name>
    <name type="ordered locus">DNO_1177</name>
</gene>
<sequence length="204" mass="22343">MIGWLQGRVLYKQNDQLLINVCGVGYELTVPQSVMASAQVGEELTVFVHHVQREDGQFLYGFSSFLQRQLFRELIRVSGIGPKLSIVILSGLTPEALIAAVRAQESAPFLRLSGIGKKTAERLLIELHDRVEKNDLFLCDESESSRAPIALSASEEAIQALIALELAPAEAELWVKKAQKTLAEDADSAALIKTAFALRLQGAK</sequence>
<reference key="1">
    <citation type="journal article" date="2007" name="Nat. Biotechnol.">
        <title>Genome sequence and identification of candidate vaccine antigens from the animal pathogen Dichelobacter nodosus.</title>
        <authorList>
            <person name="Myers G.S.A."/>
            <person name="Parker D."/>
            <person name="Al-Hasani K."/>
            <person name="Kennan R.M."/>
            <person name="Seemann T."/>
            <person name="Ren Q."/>
            <person name="Badger J.H."/>
            <person name="Selengut J.D."/>
            <person name="Deboy R.T."/>
            <person name="Tettelin H."/>
            <person name="Boyce J.D."/>
            <person name="McCarl V.P."/>
            <person name="Han X."/>
            <person name="Nelson W.C."/>
            <person name="Madupu R."/>
            <person name="Mohamoud Y."/>
            <person name="Holley T."/>
            <person name="Fedorova N."/>
            <person name="Khouri H."/>
            <person name="Bottomley S.P."/>
            <person name="Whittington R.J."/>
            <person name="Adler B."/>
            <person name="Songer J.G."/>
            <person name="Rood J.I."/>
            <person name="Paulsen I.T."/>
        </authorList>
    </citation>
    <scope>NUCLEOTIDE SEQUENCE [LARGE SCALE GENOMIC DNA]</scope>
    <source>
        <strain>VCS1703A</strain>
    </source>
</reference>
<organism>
    <name type="scientific">Dichelobacter nodosus (strain VCS1703A)</name>
    <dbReference type="NCBI Taxonomy" id="246195"/>
    <lineage>
        <taxon>Bacteria</taxon>
        <taxon>Pseudomonadati</taxon>
        <taxon>Pseudomonadota</taxon>
        <taxon>Gammaproteobacteria</taxon>
        <taxon>Cardiobacteriales</taxon>
        <taxon>Cardiobacteriaceae</taxon>
        <taxon>Dichelobacter</taxon>
    </lineage>
</organism>
<accession>A5EXH7</accession>
<dbReference type="EMBL" id="CP000513">
    <property type="protein sequence ID" value="ABQ13443.1"/>
    <property type="molecule type" value="Genomic_DNA"/>
</dbReference>
<dbReference type="RefSeq" id="WP_012031481.1">
    <property type="nucleotide sequence ID" value="NC_009446.1"/>
</dbReference>
<dbReference type="SMR" id="A5EXH7"/>
<dbReference type="STRING" id="246195.DNO_1177"/>
<dbReference type="KEGG" id="dno:DNO_1177"/>
<dbReference type="eggNOG" id="COG0632">
    <property type="taxonomic scope" value="Bacteria"/>
</dbReference>
<dbReference type="HOGENOM" id="CLU_087936_0_0_6"/>
<dbReference type="OrthoDB" id="5293449at2"/>
<dbReference type="Proteomes" id="UP000000248">
    <property type="component" value="Chromosome"/>
</dbReference>
<dbReference type="GO" id="GO:0005737">
    <property type="term" value="C:cytoplasm"/>
    <property type="evidence" value="ECO:0007669"/>
    <property type="project" value="UniProtKB-SubCell"/>
</dbReference>
<dbReference type="GO" id="GO:0048476">
    <property type="term" value="C:Holliday junction resolvase complex"/>
    <property type="evidence" value="ECO:0007669"/>
    <property type="project" value="UniProtKB-UniRule"/>
</dbReference>
<dbReference type="GO" id="GO:0005524">
    <property type="term" value="F:ATP binding"/>
    <property type="evidence" value="ECO:0007669"/>
    <property type="project" value="InterPro"/>
</dbReference>
<dbReference type="GO" id="GO:0000400">
    <property type="term" value="F:four-way junction DNA binding"/>
    <property type="evidence" value="ECO:0007669"/>
    <property type="project" value="UniProtKB-UniRule"/>
</dbReference>
<dbReference type="GO" id="GO:0009378">
    <property type="term" value="F:four-way junction helicase activity"/>
    <property type="evidence" value="ECO:0007669"/>
    <property type="project" value="InterPro"/>
</dbReference>
<dbReference type="GO" id="GO:0006310">
    <property type="term" value="P:DNA recombination"/>
    <property type="evidence" value="ECO:0007669"/>
    <property type="project" value="UniProtKB-UniRule"/>
</dbReference>
<dbReference type="GO" id="GO:0006281">
    <property type="term" value="P:DNA repair"/>
    <property type="evidence" value="ECO:0007669"/>
    <property type="project" value="UniProtKB-UniRule"/>
</dbReference>
<dbReference type="Gene3D" id="1.10.150.20">
    <property type="entry name" value="5' to 3' exonuclease, C-terminal subdomain"/>
    <property type="match status" value="1"/>
</dbReference>
<dbReference type="Gene3D" id="2.40.50.140">
    <property type="entry name" value="Nucleic acid-binding proteins"/>
    <property type="match status" value="1"/>
</dbReference>
<dbReference type="HAMAP" id="MF_00031">
    <property type="entry name" value="DNA_HJ_migration_RuvA"/>
    <property type="match status" value="1"/>
</dbReference>
<dbReference type="InterPro" id="IPR013849">
    <property type="entry name" value="DNA_helicase_Holl-junc_RuvA_I"/>
</dbReference>
<dbReference type="InterPro" id="IPR003583">
    <property type="entry name" value="Hlx-hairpin-Hlx_DNA-bd_motif"/>
</dbReference>
<dbReference type="InterPro" id="IPR012340">
    <property type="entry name" value="NA-bd_OB-fold"/>
</dbReference>
<dbReference type="InterPro" id="IPR000085">
    <property type="entry name" value="RuvA"/>
</dbReference>
<dbReference type="InterPro" id="IPR010994">
    <property type="entry name" value="RuvA_2-like"/>
</dbReference>
<dbReference type="NCBIfam" id="TIGR00084">
    <property type="entry name" value="ruvA"/>
    <property type="match status" value="1"/>
</dbReference>
<dbReference type="Pfam" id="PF14520">
    <property type="entry name" value="HHH_5"/>
    <property type="match status" value="1"/>
</dbReference>
<dbReference type="Pfam" id="PF01330">
    <property type="entry name" value="RuvA_N"/>
    <property type="match status" value="1"/>
</dbReference>
<dbReference type="SMART" id="SM00278">
    <property type="entry name" value="HhH1"/>
    <property type="match status" value="2"/>
</dbReference>
<dbReference type="SUPFAM" id="SSF50249">
    <property type="entry name" value="Nucleic acid-binding proteins"/>
    <property type="match status" value="1"/>
</dbReference>
<dbReference type="SUPFAM" id="SSF47781">
    <property type="entry name" value="RuvA domain 2-like"/>
    <property type="match status" value="1"/>
</dbReference>